<comment type="function">
    <text evidence="1">Negative regulator of replication initiation, which contributes to regulation of DNA replication and ensures that replication initiation occurs exactly once per chromosome per cell cycle. Binds to pairs of hemimethylated GATC sequences in the oriC region, thus preventing assembly of replication proteins and re-initiation at newly replicated origins. Repression is relieved when the region becomes fully methylated.</text>
</comment>
<comment type="subunit">
    <text evidence="1">Homodimer. Polymerizes to form helical filaments.</text>
</comment>
<comment type="subcellular location">
    <subcellularLocation>
        <location evidence="1">Cytoplasm</location>
    </subcellularLocation>
</comment>
<comment type="similarity">
    <text evidence="1">Belongs to the SeqA family.</text>
</comment>
<sequence>MKYIEVDEELYRLIASKTERIGESASEILRRLLGLEVEASATQEKDEPEVISQPGLEETADVEDKPRFIDLHSSINKEELAAAKGAVGRFLFILEAVYLASPEQFAQVLKIKGRDRLYFATSKQSLLKASKSANPKEIGQSGYWVTTNNNTAKKRTILTEVLHQYGTVEAQIESITRNI</sequence>
<gene>
    <name evidence="1" type="primary">seqA</name>
    <name type="ordered locus">Swoo_2274</name>
</gene>
<name>SEQA_SHEWM</name>
<evidence type="ECO:0000255" key="1">
    <source>
        <dbReference type="HAMAP-Rule" id="MF_00908"/>
    </source>
</evidence>
<protein>
    <recommendedName>
        <fullName evidence="1">Negative modulator of initiation of replication</fullName>
    </recommendedName>
</protein>
<feature type="chain" id="PRO_0000413940" description="Negative modulator of initiation of replication">
    <location>
        <begin position="1"/>
        <end position="179"/>
    </location>
</feature>
<feature type="region of interest" description="Interaction with DNA" evidence="1">
    <location>
        <begin position="86"/>
        <end position="87"/>
    </location>
</feature>
<keyword id="KW-0963">Cytoplasm</keyword>
<keyword id="KW-0236">DNA replication inhibitor</keyword>
<keyword id="KW-0238">DNA-binding</keyword>
<keyword id="KW-1185">Reference proteome</keyword>
<reference key="1">
    <citation type="submission" date="2008-02" db="EMBL/GenBank/DDBJ databases">
        <title>Complete sequence of Shewanella woodyi ATCC 51908.</title>
        <authorList>
            <consortium name="US DOE Joint Genome Institute"/>
            <person name="Copeland A."/>
            <person name="Lucas S."/>
            <person name="Lapidus A."/>
            <person name="Glavina del Rio T."/>
            <person name="Dalin E."/>
            <person name="Tice H."/>
            <person name="Bruce D."/>
            <person name="Goodwin L."/>
            <person name="Pitluck S."/>
            <person name="Sims D."/>
            <person name="Brettin T."/>
            <person name="Detter J.C."/>
            <person name="Han C."/>
            <person name="Kuske C.R."/>
            <person name="Schmutz J."/>
            <person name="Larimer F."/>
            <person name="Land M."/>
            <person name="Hauser L."/>
            <person name="Kyrpides N."/>
            <person name="Lykidis A."/>
            <person name="Zhao J.-S."/>
            <person name="Richardson P."/>
        </authorList>
    </citation>
    <scope>NUCLEOTIDE SEQUENCE [LARGE SCALE GENOMIC DNA]</scope>
    <source>
        <strain>ATCC 51908 / MS32</strain>
    </source>
</reference>
<organism>
    <name type="scientific">Shewanella woodyi (strain ATCC 51908 / MS32)</name>
    <dbReference type="NCBI Taxonomy" id="392500"/>
    <lineage>
        <taxon>Bacteria</taxon>
        <taxon>Pseudomonadati</taxon>
        <taxon>Pseudomonadota</taxon>
        <taxon>Gammaproteobacteria</taxon>
        <taxon>Alteromonadales</taxon>
        <taxon>Shewanellaceae</taxon>
        <taxon>Shewanella</taxon>
    </lineage>
</organism>
<dbReference type="EMBL" id="CP000961">
    <property type="protein sequence ID" value="ACA86555.1"/>
    <property type="molecule type" value="Genomic_DNA"/>
</dbReference>
<dbReference type="RefSeq" id="WP_012324898.1">
    <property type="nucleotide sequence ID" value="NC_010506.1"/>
</dbReference>
<dbReference type="SMR" id="B1KEH7"/>
<dbReference type="STRING" id="392500.Swoo_2274"/>
<dbReference type="KEGG" id="swd:Swoo_2274"/>
<dbReference type="eggNOG" id="COG3057">
    <property type="taxonomic scope" value="Bacteria"/>
</dbReference>
<dbReference type="HOGENOM" id="CLU_099733_0_0_6"/>
<dbReference type="Proteomes" id="UP000002168">
    <property type="component" value="Chromosome"/>
</dbReference>
<dbReference type="GO" id="GO:0005737">
    <property type="term" value="C:cytoplasm"/>
    <property type="evidence" value="ECO:0007669"/>
    <property type="project" value="UniProtKB-SubCell"/>
</dbReference>
<dbReference type="GO" id="GO:0003677">
    <property type="term" value="F:DNA binding"/>
    <property type="evidence" value="ECO:0007669"/>
    <property type="project" value="UniProtKB-UniRule"/>
</dbReference>
<dbReference type="GO" id="GO:0032297">
    <property type="term" value="P:negative regulation of DNA-templated DNA replication initiation"/>
    <property type="evidence" value="ECO:0007669"/>
    <property type="project" value="UniProtKB-UniRule"/>
</dbReference>
<dbReference type="GO" id="GO:0006355">
    <property type="term" value="P:regulation of DNA-templated transcription"/>
    <property type="evidence" value="ECO:0007669"/>
    <property type="project" value="InterPro"/>
</dbReference>
<dbReference type="Gene3D" id="1.10.1220.10">
    <property type="entry name" value="Met repressor-like"/>
    <property type="match status" value="1"/>
</dbReference>
<dbReference type="Gene3D" id="1.20.1380.10">
    <property type="entry name" value="Replication modulator SeqA, C-terminal DNA-binding domain"/>
    <property type="match status" value="1"/>
</dbReference>
<dbReference type="HAMAP" id="MF_00908">
    <property type="entry name" value="SeqA"/>
    <property type="match status" value="1"/>
</dbReference>
<dbReference type="InterPro" id="IPR013321">
    <property type="entry name" value="Arc_rbn_hlx_hlx"/>
</dbReference>
<dbReference type="InterPro" id="IPR010985">
    <property type="entry name" value="Ribbon_hlx_hlx"/>
</dbReference>
<dbReference type="InterPro" id="IPR005621">
    <property type="entry name" value="SeqA"/>
</dbReference>
<dbReference type="InterPro" id="IPR026577">
    <property type="entry name" value="SeqA_DNA-bd_C"/>
</dbReference>
<dbReference type="InterPro" id="IPR036835">
    <property type="entry name" value="SeqA_DNA-bd_C_sf"/>
</dbReference>
<dbReference type="InterPro" id="IPR033761">
    <property type="entry name" value="SeqA_N"/>
</dbReference>
<dbReference type="NCBIfam" id="NF008389">
    <property type="entry name" value="PRK11187.1"/>
    <property type="match status" value="1"/>
</dbReference>
<dbReference type="Pfam" id="PF03925">
    <property type="entry name" value="SeqA"/>
    <property type="match status" value="1"/>
</dbReference>
<dbReference type="Pfam" id="PF17206">
    <property type="entry name" value="SeqA_N"/>
    <property type="match status" value="1"/>
</dbReference>
<dbReference type="PIRSF" id="PIRSF019401">
    <property type="entry name" value="SeqA"/>
    <property type="match status" value="1"/>
</dbReference>
<dbReference type="SUPFAM" id="SSF82808">
    <property type="entry name" value="Replication modulator SeqA, C-terminal DNA-binding domain"/>
    <property type="match status" value="1"/>
</dbReference>
<dbReference type="SUPFAM" id="SSF47598">
    <property type="entry name" value="Ribbon-helix-helix"/>
    <property type="match status" value="1"/>
</dbReference>
<accession>B1KEH7</accession>
<proteinExistence type="inferred from homology"/>